<protein>
    <recommendedName>
        <fullName evidence="1">LexA repressor</fullName>
        <ecNumber evidence="1">3.4.21.88</ecNumber>
    </recommendedName>
</protein>
<feature type="chain" id="PRO_1000201824" description="LexA repressor">
    <location>
        <begin position="1"/>
        <end position="204"/>
    </location>
</feature>
<feature type="DNA-binding region" description="H-T-H motif" evidence="1">
    <location>
        <begin position="27"/>
        <end position="47"/>
    </location>
</feature>
<feature type="active site" description="For autocatalytic cleavage activity" evidence="1">
    <location>
        <position position="126"/>
    </location>
</feature>
<feature type="active site" description="For autocatalytic cleavage activity" evidence="1">
    <location>
        <position position="164"/>
    </location>
</feature>
<feature type="site" description="Cleavage; by autolysis" evidence="1">
    <location>
        <begin position="90"/>
        <end position="91"/>
    </location>
</feature>
<dbReference type="EC" id="3.4.21.88" evidence="1"/>
<dbReference type="EMBL" id="FM242711">
    <property type="protein sequence ID" value="CAS05075.1"/>
    <property type="molecule type" value="Genomic_DNA"/>
</dbReference>
<dbReference type="RefSeq" id="WP_003723438.1">
    <property type="nucleotide sequence ID" value="NC_012488.1"/>
</dbReference>
<dbReference type="SMR" id="C1L2K9"/>
<dbReference type="MEROPS" id="S24.001"/>
<dbReference type="GeneID" id="86846725"/>
<dbReference type="KEGG" id="lmc:Lm4b_01311"/>
<dbReference type="HOGENOM" id="CLU_066192_45_1_9"/>
<dbReference type="GO" id="GO:0003677">
    <property type="term" value="F:DNA binding"/>
    <property type="evidence" value="ECO:0007669"/>
    <property type="project" value="UniProtKB-UniRule"/>
</dbReference>
<dbReference type="GO" id="GO:0004252">
    <property type="term" value="F:serine-type endopeptidase activity"/>
    <property type="evidence" value="ECO:0007669"/>
    <property type="project" value="UniProtKB-UniRule"/>
</dbReference>
<dbReference type="GO" id="GO:0006281">
    <property type="term" value="P:DNA repair"/>
    <property type="evidence" value="ECO:0007669"/>
    <property type="project" value="UniProtKB-UniRule"/>
</dbReference>
<dbReference type="GO" id="GO:0006260">
    <property type="term" value="P:DNA replication"/>
    <property type="evidence" value="ECO:0007669"/>
    <property type="project" value="UniProtKB-UniRule"/>
</dbReference>
<dbReference type="GO" id="GO:0045892">
    <property type="term" value="P:negative regulation of DNA-templated transcription"/>
    <property type="evidence" value="ECO:0007669"/>
    <property type="project" value="UniProtKB-UniRule"/>
</dbReference>
<dbReference type="GO" id="GO:0006508">
    <property type="term" value="P:proteolysis"/>
    <property type="evidence" value="ECO:0007669"/>
    <property type="project" value="InterPro"/>
</dbReference>
<dbReference type="GO" id="GO:0009432">
    <property type="term" value="P:SOS response"/>
    <property type="evidence" value="ECO:0007669"/>
    <property type="project" value="UniProtKB-UniRule"/>
</dbReference>
<dbReference type="CDD" id="cd00090">
    <property type="entry name" value="HTH_ARSR"/>
    <property type="match status" value="1"/>
</dbReference>
<dbReference type="CDD" id="cd06529">
    <property type="entry name" value="S24_LexA-like"/>
    <property type="match status" value="1"/>
</dbReference>
<dbReference type="FunFam" id="1.10.10.10:FF:000009">
    <property type="entry name" value="LexA repressor"/>
    <property type="match status" value="1"/>
</dbReference>
<dbReference type="FunFam" id="2.10.109.10:FF:000001">
    <property type="entry name" value="LexA repressor"/>
    <property type="match status" value="1"/>
</dbReference>
<dbReference type="Gene3D" id="2.10.109.10">
    <property type="entry name" value="Umud Fragment, subunit A"/>
    <property type="match status" value="1"/>
</dbReference>
<dbReference type="Gene3D" id="1.10.10.10">
    <property type="entry name" value="Winged helix-like DNA-binding domain superfamily/Winged helix DNA-binding domain"/>
    <property type="match status" value="1"/>
</dbReference>
<dbReference type="HAMAP" id="MF_00015">
    <property type="entry name" value="LexA"/>
    <property type="match status" value="1"/>
</dbReference>
<dbReference type="InterPro" id="IPR011991">
    <property type="entry name" value="ArsR-like_HTH"/>
</dbReference>
<dbReference type="InterPro" id="IPR006200">
    <property type="entry name" value="LexA"/>
</dbReference>
<dbReference type="InterPro" id="IPR039418">
    <property type="entry name" value="LexA-like"/>
</dbReference>
<dbReference type="InterPro" id="IPR036286">
    <property type="entry name" value="LexA/Signal_pep-like_sf"/>
</dbReference>
<dbReference type="InterPro" id="IPR006199">
    <property type="entry name" value="LexA_DNA-bd_dom"/>
</dbReference>
<dbReference type="InterPro" id="IPR050077">
    <property type="entry name" value="LexA_repressor"/>
</dbReference>
<dbReference type="InterPro" id="IPR006197">
    <property type="entry name" value="Peptidase_S24_LexA"/>
</dbReference>
<dbReference type="InterPro" id="IPR015927">
    <property type="entry name" value="Peptidase_S24_S26A/B/C"/>
</dbReference>
<dbReference type="InterPro" id="IPR036388">
    <property type="entry name" value="WH-like_DNA-bd_sf"/>
</dbReference>
<dbReference type="InterPro" id="IPR036390">
    <property type="entry name" value="WH_DNA-bd_sf"/>
</dbReference>
<dbReference type="NCBIfam" id="TIGR00498">
    <property type="entry name" value="lexA"/>
    <property type="match status" value="1"/>
</dbReference>
<dbReference type="PANTHER" id="PTHR33516">
    <property type="entry name" value="LEXA REPRESSOR"/>
    <property type="match status" value="1"/>
</dbReference>
<dbReference type="PANTHER" id="PTHR33516:SF2">
    <property type="entry name" value="LEXA REPRESSOR-RELATED"/>
    <property type="match status" value="1"/>
</dbReference>
<dbReference type="Pfam" id="PF01726">
    <property type="entry name" value="LexA_DNA_bind"/>
    <property type="match status" value="1"/>
</dbReference>
<dbReference type="Pfam" id="PF00717">
    <property type="entry name" value="Peptidase_S24"/>
    <property type="match status" value="1"/>
</dbReference>
<dbReference type="PRINTS" id="PR00726">
    <property type="entry name" value="LEXASERPTASE"/>
</dbReference>
<dbReference type="SUPFAM" id="SSF51306">
    <property type="entry name" value="LexA/Signal peptidase"/>
    <property type="match status" value="1"/>
</dbReference>
<dbReference type="SUPFAM" id="SSF46785">
    <property type="entry name" value="Winged helix' DNA-binding domain"/>
    <property type="match status" value="1"/>
</dbReference>
<gene>
    <name evidence="1" type="primary">lexA</name>
    <name type="ordered locus">Lm4b_01311</name>
</gene>
<organism>
    <name type="scientific">Listeria monocytogenes serotype 4b (strain CLIP80459)</name>
    <dbReference type="NCBI Taxonomy" id="568819"/>
    <lineage>
        <taxon>Bacteria</taxon>
        <taxon>Bacillati</taxon>
        <taxon>Bacillota</taxon>
        <taxon>Bacilli</taxon>
        <taxon>Bacillales</taxon>
        <taxon>Listeriaceae</taxon>
        <taxon>Listeria</taxon>
    </lineage>
</organism>
<reference key="1">
    <citation type="journal article" date="2012" name="BMC Genomics">
        <title>Comparative genomics and transcriptomics of lineages I, II, and III strains of Listeria monocytogenes.</title>
        <authorList>
            <person name="Hain T."/>
            <person name="Ghai R."/>
            <person name="Billion A."/>
            <person name="Kuenne C.T."/>
            <person name="Steinweg C."/>
            <person name="Izar B."/>
            <person name="Mohamed W."/>
            <person name="Mraheil M."/>
            <person name="Domann E."/>
            <person name="Schaffrath S."/>
            <person name="Karst U."/>
            <person name="Goesmann A."/>
            <person name="Oehm S."/>
            <person name="Puhler A."/>
            <person name="Merkl R."/>
            <person name="Vorwerk S."/>
            <person name="Glaser P."/>
            <person name="Garrido P."/>
            <person name="Rusniok C."/>
            <person name="Buchrieser C."/>
            <person name="Goebel W."/>
            <person name="Chakraborty T."/>
        </authorList>
    </citation>
    <scope>NUCLEOTIDE SEQUENCE [LARGE SCALE GENOMIC DNA]</scope>
    <source>
        <strain>CLIP80459</strain>
    </source>
</reference>
<name>LEXA_LISMC</name>
<sequence length="204" mass="22637">MKISKRQQDIYEFIKSEVKEKGYPPSVREIGEAVGLASSSTVHGHLARLEGKGLIRRDPTKPRAIEILSLEDEAETPNVVNIPIIGKVTAGMPITAIENIDEYFPLPEYMAAGETNVFMLEIDGESMINAGILDGDKVIVRQQSSAINGEIVVAMTDENEATCKRFYKEANHFRLQPENDALEPILLNNVTILGKVIGLYRDIR</sequence>
<comment type="function">
    <text evidence="1">Represses a number of genes involved in the response to DNA damage (SOS response), including recA and lexA. In the presence of single-stranded DNA, RecA interacts with LexA causing an autocatalytic cleavage which disrupts the DNA-binding part of LexA, leading to derepression of the SOS regulon and eventually DNA repair.</text>
</comment>
<comment type="catalytic activity">
    <reaction evidence="1">
        <text>Hydrolysis of Ala-|-Gly bond in repressor LexA.</text>
        <dbReference type="EC" id="3.4.21.88"/>
    </reaction>
</comment>
<comment type="subunit">
    <text evidence="1">Homodimer.</text>
</comment>
<comment type="similarity">
    <text evidence="1">Belongs to the peptidase S24 family.</text>
</comment>
<keyword id="KW-0068">Autocatalytic cleavage</keyword>
<keyword id="KW-0227">DNA damage</keyword>
<keyword id="KW-0234">DNA repair</keyword>
<keyword id="KW-0235">DNA replication</keyword>
<keyword id="KW-0238">DNA-binding</keyword>
<keyword id="KW-0378">Hydrolase</keyword>
<keyword id="KW-0678">Repressor</keyword>
<keyword id="KW-0742">SOS response</keyword>
<keyword id="KW-0804">Transcription</keyword>
<keyword id="KW-0805">Transcription regulation</keyword>
<evidence type="ECO:0000255" key="1">
    <source>
        <dbReference type="HAMAP-Rule" id="MF_00015"/>
    </source>
</evidence>
<accession>C1L2K9</accession>
<proteinExistence type="inferred from homology"/>